<evidence type="ECO:0000250" key="1">
    <source>
        <dbReference type="UniProtKB" id="P17127"/>
    </source>
</evidence>
<evidence type="ECO:0000250" key="2">
    <source>
        <dbReference type="UniProtKB" id="P44715"/>
    </source>
</evidence>
<evidence type="ECO:0000250" key="3">
    <source>
        <dbReference type="UniProtKB" id="P69811"/>
    </source>
</evidence>
<evidence type="ECO:0000255" key="4">
    <source>
        <dbReference type="PROSITE-ProRule" id="PRU00417"/>
    </source>
</evidence>
<evidence type="ECO:0000255" key="5">
    <source>
        <dbReference type="PROSITE-ProRule" id="PRU00681"/>
    </source>
</evidence>
<evidence type="ECO:0000269" key="6">
    <source>
    </source>
</evidence>
<evidence type="ECO:0000269" key="7">
    <source>
    </source>
</evidence>
<evidence type="ECO:0000303" key="8">
    <source>
    </source>
</evidence>
<evidence type="ECO:0000312" key="9">
    <source>
        <dbReference type="EMBL" id="AAF96421.1"/>
    </source>
</evidence>
<organism>
    <name type="scientific">Vibrio cholerae serotype O1 (strain ATCC 39315 / El Tor Inaba N16961)</name>
    <dbReference type="NCBI Taxonomy" id="243277"/>
    <lineage>
        <taxon>Bacteria</taxon>
        <taxon>Pseudomonadati</taxon>
        <taxon>Pseudomonadota</taxon>
        <taxon>Gammaproteobacteria</taxon>
        <taxon>Vibrionales</taxon>
        <taxon>Vibrionaceae</taxon>
        <taxon>Vibrio</taxon>
    </lineage>
</organism>
<keyword id="KW-0963">Cytoplasm</keyword>
<keyword id="KW-0418">Kinase</keyword>
<keyword id="KW-0597">Phosphoprotein</keyword>
<keyword id="KW-0598">Phosphotransferase system</keyword>
<keyword id="KW-1185">Reference proteome</keyword>
<keyword id="KW-0762">Sugar transport</keyword>
<keyword id="KW-0808">Transferase</keyword>
<keyword id="KW-0813">Transport</keyword>
<dbReference type="EMBL" id="AE003853">
    <property type="protein sequence ID" value="AAF96421.1"/>
    <property type="molecule type" value="Genomic_DNA"/>
</dbReference>
<dbReference type="PIR" id="D82450">
    <property type="entry name" value="D82450"/>
</dbReference>
<dbReference type="RefSeq" id="NP_232909.1">
    <property type="nucleotide sequence ID" value="NC_002506.1"/>
</dbReference>
<dbReference type="RefSeq" id="WP_000891934.1">
    <property type="nucleotide sequence ID" value="NZ_LT906615.1"/>
</dbReference>
<dbReference type="SMR" id="Q9KM70"/>
<dbReference type="STRING" id="243277.VC_A0518"/>
<dbReference type="DNASU" id="2612791"/>
<dbReference type="EnsemblBacteria" id="AAF96421">
    <property type="protein sequence ID" value="AAF96421"/>
    <property type="gene ID" value="VC_A0518"/>
</dbReference>
<dbReference type="KEGG" id="vch:VC_A0518"/>
<dbReference type="PATRIC" id="fig|243277.26.peg.3144"/>
<dbReference type="eggNOG" id="COG1925">
    <property type="taxonomic scope" value="Bacteria"/>
</dbReference>
<dbReference type="eggNOG" id="COG4668">
    <property type="taxonomic scope" value="Bacteria"/>
</dbReference>
<dbReference type="HOGENOM" id="CLU_046384_0_0_6"/>
<dbReference type="Proteomes" id="UP000000584">
    <property type="component" value="Chromosome 2"/>
</dbReference>
<dbReference type="GO" id="GO:0005737">
    <property type="term" value="C:cytoplasm"/>
    <property type="evidence" value="ECO:0007669"/>
    <property type="project" value="UniProtKB-SubCell"/>
</dbReference>
<dbReference type="GO" id="GO:0005886">
    <property type="term" value="C:plasma membrane"/>
    <property type="evidence" value="ECO:0000318"/>
    <property type="project" value="GO_Central"/>
</dbReference>
<dbReference type="GO" id="GO:0016301">
    <property type="term" value="F:kinase activity"/>
    <property type="evidence" value="ECO:0007669"/>
    <property type="project" value="UniProtKB-KW"/>
</dbReference>
<dbReference type="GO" id="GO:0090563">
    <property type="term" value="F:protein-phosphocysteine-sugar phosphotransferase activity"/>
    <property type="evidence" value="ECO:0000318"/>
    <property type="project" value="GO_Central"/>
</dbReference>
<dbReference type="GO" id="GO:0009401">
    <property type="term" value="P:phosphoenolpyruvate-dependent sugar phosphotransferase system"/>
    <property type="evidence" value="ECO:0000318"/>
    <property type="project" value="GO_Central"/>
</dbReference>
<dbReference type="CDD" id="cd00367">
    <property type="entry name" value="PTS-HPr_like"/>
    <property type="match status" value="1"/>
</dbReference>
<dbReference type="CDD" id="cd00211">
    <property type="entry name" value="PTS_IIA_fru"/>
    <property type="match status" value="1"/>
</dbReference>
<dbReference type="FunFam" id="3.30.1340.10:FF:000005">
    <property type="entry name" value="Fructose-specific PTS system IIA component"/>
    <property type="match status" value="1"/>
</dbReference>
<dbReference type="FunFam" id="3.40.930.10:FF:000006">
    <property type="entry name" value="Fructose-specific PTS system IIA component"/>
    <property type="match status" value="1"/>
</dbReference>
<dbReference type="Gene3D" id="3.30.1340.10">
    <property type="entry name" value="HPr-like"/>
    <property type="match status" value="1"/>
</dbReference>
<dbReference type="Gene3D" id="3.40.930.10">
    <property type="entry name" value="Mannitol-specific EII, Chain A"/>
    <property type="match status" value="1"/>
</dbReference>
<dbReference type="InterPro" id="IPR000032">
    <property type="entry name" value="HPr-like"/>
</dbReference>
<dbReference type="InterPro" id="IPR035895">
    <property type="entry name" value="HPr-like_sf"/>
</dbReference>
<dbReference type="InterPro" id="IPR016152">
    <property type="entry name" value="PTrfase/Anion_transptr"/>
</dbReference>
<dbReference type="InterPro" id="IPR002178">
    <property type="entry name" value="PTS_EIIA_type-2_dom"/>
</dbReference>
<dbReference type="InterPro" id="IPR001020">
    <property type="entry name" value="PTS_HPr_His_P_site"/>
</dbReference>
<dbReference type="InterPro" id="IPR002114">
    <property type="entry name" value="PTS_HPr_Ser_P_site"/>
</dbReference>
<dbReference type="InterPro" id="IPR050893">
    <property type="entry name" value="Sugar_PTS"/>
</dbReference>
<dbReference type="NCBIfam" id="NF008319">
    <property type="entry name" value="PRK11109.1"/>
    <property type="match status" value="1"/>
</dbReference>
<dbReference type="NCBIfam" id="TIGR01003">
    <property type="entry name" value="PTS_HPr_family"/>
    <property type="match status" value="1"/>
</dbReference>
<dbReference type="PANTHER" id="PTHR30181">
    <property type="entry name" value="MANNITOL PERMEASE IIC COMPONENT"/>
    <property type="match status" value="1"/>
</dbReference>
<dbReference type="PANTHER" id="PTHR30181:SF3">
    <property type="entry name" value="MULTIPHOSPHORYL TRANSFER PROTEIN"/>
    <property type="match status" value="1"/>
</dbReference>
<dbReference type="Pfam" id="PF00381">
    <property type="entry name" value="PTS-HPr"/>
    <property type="match status" value="1"/>
</dbReference>
<dbReference type="Pfam" id="PF00359">
    <property type="entry name" value="PTS_EIIA_2"/>
    <property type="match status" value="1"/>
</dbReference>
<dbReference type="PRINTS" id="PR00107">
    <property type="entry name" value="PHOSPHOCPHPR"/>
</dbReference>
<dbReference type="SUPFAM" id="SSF55594">
    <property type="entry name" value="HPr-like"/>
    <property type="match status" value="1"/>
</dbReference>
<dbReference type="SUPFAM" id="SSF55804">
    <property type="entry name" value="Phoshotransferase/anion transport protein"/>
    <property type="match status" value="2"/>
</dbReference>
<dbReference type="PROSITE" id="PS51094">
    <property type="entry name" value="PTS_EIIA_TYPE_2"/>
    <property type="match status" value="1"/>
</dbReference>
<dbReference type="PROSITE" id="PS00372">
    <property type="entry name" value="PTS_EIIA_TYPE_2_HIS"/>
    <property type="match status" value="1"/>
</dbReference>
<dbReference type="PROSITE" id="PS51350">
    <property type="entry name" value="PTS_HPR_DOM"/>
    <property type="match status" value="1"/>
</dbReference>
<dbReference type="PROSITE" id="PS00369">
    <property type="entry name" value="PTS_HPR_HIS"/>
    <property type="match status" value="1"/>
</dbReference>
<dbReference type="PROSITE" id="PS00589">
    <property type="entry name" value="PTS_HPR_SER"/>
    <property type="match status" value="1"/>
</dbReference>
<proteinExistence type="evidence at transcript level"/>
<gene>
    <name evidence="8" type="primary">fruB</name>
    <name evidence="9" type="ordered locus">VC_A0518</name>
</gene>
<name>PTFAH_VIBCH</name>
<feature type="chain" id="PRO_0000453370" description="Multiphosphoryl transfer protein">
    <location>
        <begin position="1"/>
        <end position="400"/>
    </location>
</feature>
<feature type="domain" description="PTS EIIA type-2" evidence="4">
    <location>
        <begin position="2"/>
        <end position="142"/>
    </location>
</feature>
<feature type="domain" description="HPr" evidence="5">
    <location>
        <begin position="310"/>
        <end position="400"/>
    </location>
</feature>
<feature type="active site" description="Tele-phosphohistidine intermediate; for EIIA activity" evidence="4">
    <location>
        <position position="62"/>
    </location>
</feature>
<feature type="active site" description="Pros-phosphohistidine intermediate; for HPr activity" evidence="5">
    <location>
        <position position="324"/>
    </location>
</feature>
<feature type="modified residue" description="Phosphohistidine; by HPr" evidence="3">
    <location>
        <position position="62"/>
    </location>
</feature>
<feature type="modified residue" description="Phosphohistidine; by EI" evidence="3">
    <location>
        <position position="324"/>
    </location>
</feature>
<sequence>MLELTTQDIQLQQHFANKQAAIQGLAHALTAKGLVAEGYAQGMLNREAQHSTYLGNGIAIPHGTTDTRELVKQTGVTAMHFPQGLDWGDGNLVYVAIGIAAKSDEHLGILKQLTRVLSADGVEQALQQAKTAQQIIAIIKGEAQLTADFDASLIQLQFPASDMVQMSAVAGGLLKNTGCAENEFVADLVTKAPTHLGRGLWLVASDRAVKRTGMSIVTTANHCEYEQQAVKALIAFSVCNDVHQPLLNTITQCVFEQKQDQLLQADVQQLLNLFSGNAEQTIAQRTIAVGTITEETIAAETVAEPDSARAHTATFRIKNSHGLHARPGAMLVAEAKKFESNIRVSNLDGDGQVVNAKSLMKVIALGVKHNHQLQFTAEGPDAEAALQALGVAINAGLGEG</sequence>
<accession>Q9KM70</accession>
<reference key="1">
    <citation type="journal article" date="2000" name="Nature">
        <title>DNA sequence of both chromosomes of the cholera pathogen Vibrio cholerae.</title>
        <authorList>
            <person name="Heidelberg J.F."/>
            <person name="Eisen J.A."/>
            <person name="Nelson W.C."/>
            <person name="Clayton R.A."/>
            <person name="Gwinn M.L."/>
            <person name="Dodson R.J."/>
            <person name="Haft D.H."/>
            <person name="Hickey E.K."/>
            <person name="Peterson J.D."/>
            <person name="Umayam L.A."/>
            <person name="Gill S.R."/>
            <person name="Nelson K.E."/>
            <person name="Read T.D."/>
            <person name="Tettelin H."/>
            <person name="Richardson D.L."/>
            <person name="Ermolaeva M.D."/>
            <person name="Vamathevan J.J."/>
            <person name="Bass S."/>
            <person name="Qin H."/>
            <person name="Dragoi I."/>
            <person name="Sellers P."/>
            <person name="McDonald L.A."/>
            <person name="Utterback T.R."/>
            <person name="Fleischmann R.D."/>
            <person name="Nierman W.C."/>
            <person name="White O."/>
            <person name="Salzberg S.L."/>
            <person name="Smith H.O."/>
            <person name="Colwell R.R."/>
            <person name="Mekalanos J.J."/>
            <person name="Venter J.C."/>
            <person name="Fraser C.M."/>
        </authorList>
    </citation>
    <scope>NUCLEOTIDE SEQUENCE [LARGE SCALE GENOMIC DNA]</scope>
    <source>
        <strain>ATCC 39315 / El Tor Inaba N16961</strain>
    </source>
</reference>
<reference key="2">
    <citation type="journal article" date="2021" name="Nucleic Acids Res.">
        <title>Vibrio cholerae FruR facilitates binding of RNA polymerase to the fru promoter in the presence of fructose 1-phosphate.</title>
        <authorList>
            <person name="Yoon C.K."/>
            <person name="Kang D."/>
            <person name="Kim M.K."/>
            <person name="Seok Y.J."/>
        </authorList>
    </citation>
    <scope>INDUCTION</scope>
    <scope>DISRUPTION PHENOTYPE</scope>
    <source>
        <strain>ATCC 39315 / El Tor Inaba N16961</strain>
    </source>
</reference>
<reference key="3">
    <citation type="journal article" date="2021" name="J. Bacteriol.">
        <title>Cra and cAMP receptor protein have opposing roles in the regulation of fruB in Vibrio cholerae.</title>
        <authorList>
            <person name="Beck C."/>
            <person name="Perry S."/>
            <person name="Stoebel D.M."/>
            <person name="Liu J.M."/>
        </authorList>
    </citation>
    <scope>INDUCTION</scope>
    <source>
        <strain>ATCC 39315 / El Tor Inaba N16961</strain>
    </source>
</reference>
<comment type="function">
    <text evidence="3">The phosphoenolpyruvate-dependent sugar phosphotransferase system (sugar PTS), a major carbohydrate active transport system, catalyzes the phosphorylation of incoming sugar substrates concomitantly with their translocation across the cell membrane. The enzyme II FruAB PTS system is involved in fructose transport.</text>
</comment>
<comment type="subcellular location">
    <subcellularLocation>
        <location evidence="3">Cytoplasm</location>
    </subcellularLocation>
</comment>
<comment type="induction">
    <text evidence="6 7">Part of the fruBKA (fru) operon, which is induced in the presence of fructose via the FruR (Cra) regulatory protein (PubMed:33476373). Transcription is repressed by FruR in the absence of fructose (PubMed:33649152). CRP activates expression of the fru operon in the absence of glucose (PubMed:33649152). The two regulators can work independently to control the expression of the operon depending on carbon source availability (PubMed:33649152).</text>
</comment>
<comment type="domain">
    <text evidence="4">The PTS EIIA type-2 domain is phosphorylated by phospho-HPr on a histidyl residue. Then, it transfers the phosphoryl group to the PTS EIIB type-2 domain.</text>
</comment>
<comment type="domain">
    <text evidence="3">In contrast to classical PTS systems, the fructose-specific PTS has no requirement for HPr; FruB combines a IIA domain with a HPr domain.</text>
</comment>
<comment type="disruption phenotype">
    <text evidence="6">Does not affect growth on glucose. Mutant shows a slight growth retardation on fructose.</text>
</comment>
<protein>
    <recommendedName>
        <fullName evidence="2">Multiphosphoryl transfer protein</fullName>
        <shortName evidence="2">MTP</shortName>
    </recommendedName>
    <domain>
        <recommendedName>
            <fullName evidence="3">PTS system fructose-specific EIIA component</fullName>
        </recommendedName>
        <alternativeName>
            <fullName evidence="1">EIIA-Fru</fullName>
        </alternativeName>
        <alternativeName>
            <fullName evidence="1">EIII-Fru</fullName>
        </alternativeName>
        <alternativeName>
            <fullName evidence="3">Fructose-specific phosphotransferase enzyme IIA component</fullName>
        </alternativeName>
    </domain>
    <domain>
        <recommendedName>
            <fullName evidence="1">Phosphocarrier protein HPr</fullName>
            <shortName evidence="1">Protein H</shortName>
        </recommendedName>
    </domain>
</protein>